<sequence length="640" mass="69286">MSGQSLTDRITAAQHSVTGSAVSKTVCKATTHEIMGPKKKHLDYLIQCTNEMNVNIPQLADSLFERTTNSSWVVVFKSLITTHHLMVYGNERFIQYLASRNTLFNLSNFLDKSGLQGYDMSTFIRRYSRYLNEKAVSYRQVAFDFTKVKRGADGVMRTMNTEKLLKTVPIIQNQMDALLDFNVNSNELTNGVINAAFMLLFKDAIRLFAAYNEGIINLLEKYFDMKKNQCKEGLDIYKKFLTRMTRISEFLKVAEQVGIDRGDIPDLSQAPSSLLDALEQHLASLEGKKIKDSTAASRATTLSNAVSSLASTGLSLTKVDEREKQAALEEEQARLKALKEQRLKELAKKPHTSLTTAASPVSTSAGGIMTAPAIDIFSTPSSSNSTSKLPNDLLDLQQPTFHPSVHAMSAAPQVASTWGDAVDDAIPSLNPFLTKSSGDVHLPISSDVSTFTTRTPTHEMFVGFSPSPVTQPHPSAGLNVDFESVFGNKSTNVAVDSGGGLLKPTVASQNQSLPVAKLPPNKLVSDDLDSSLANLVGNLGIGNGTTKNDVSCSQPGEKKLTGGSNWQPKVAPTTAWSAATMAPPVMAYPATTPTGMIGYGIPPQMGSVPVMTQPTLIYSQPVMRPPNPFGPVPGAQIQFM</sequence>
<gene>
    <name type="primary">Picalm</name>
    <name type="synonym">Calm</name>
</gene>
<proteinExistence type="evidence at protein level"/>
<feature type="initiator methionine" description="Removed" evidence="2">
    <location>
        <position position="1"/>
    </location>
</feature>
<feature type="chain" id="PRO_0000187064" description="Phosphatidylinositol-binding clathrin assembly protein">
    <location>
        <begin position="2"/>
        <end position="640"/>
    </location>
</feature>
<feature type="domain" description="ENTH" evidence="3 8">
    <location>
        <begin position="14"/>
        <end position="145"/>
    </location>
</feature>
<feature type="region of interest" description="Interaction with PIMREG" evidence="1">
    <location>
        <begin position="221"/>
        <end position="294"/>
    </location>
</feature>
<feature type="region of interest" description="Disordered" evidence="4">
    <location>
        <begin position="543"/>
        <end position="568"/>
    </location>
</feature>
<feature type="compositionally biased region" description="Polar residues" evidence="4">
    <location>
        <begin position="544"/>
        <end position="554"/>
    </location>
</feature>
<feature type="modified residue" description="N-acetylserine" evidence="2">
    <location>
        <position position="2"/>
    </location>
</feature>
<feature type="modified residue" description="Phosphoserine" evidence="2">
    <location>
        <position position="16"/>
    </location>
</feature>
<feature type="modified residue" description="Phosphoserine" evidence="2">
    <location>
        <position position="20"/>
    </location>
</feature>
<feature type="modified residue" description="Phosphoserine" evidence="2">
    <location>
        <position position="303"/>
    </location>
</feature>
<feature type="modified residue" description="Phosphoserine" evidence="2">
    <location>
        <position position="315"/>
    </location>
</feature>
<feature type="cross-link" description="Glycyl lysine isopeptide (Lys-Gly) (interchain with G-Cter in SUMO2)" evidence="2">
    <location>
        <position position="238"/>
    </location>
</feature>
<feature type="splice variant" id="VSP_050687" description="In isoform 2." evidence="7">
    <location>
        <begin position="420"/>
        <end position="462"/>
    </location>
</feature>
<feature type="helix" evidence="12">
    <location>
        <begin position="6"/>
        <end position="29"/>
    </location>
</feature>
<feature type="strand" evidence="12">
    <location>
        <begin position="32"/>
        <end position="35"/>
    </location>
</feature>
<feature type="helix" evidence="12">
    <location>
        <begin position="39"/>
        <end position="50"/>
    </location>
</feature>
<feature type="helix" evidence="12">
    <location>
        <begin position="56"/>
        <end position="66"/>
    </location>
</feature>
<feature type="helix" evidence="12">
    <location>
        <begin position="72"/>
        <end position="88"/>
    </location>
</feature>
<feature type="helix" evidence="12">
    <location>
        <begin position="91"/>
        <end position="99"/>
    </location>
</feature>
<feature type="helix" evidence="12">
    <location>
        <begin position="115"/>
        <end position="141"/>
    </location>
</feature>
<feature type="turn" evidence="12">
    <location>
        <begin position="145"/>
        <end position="147"/>
    </location>
</feature>
<feature type="strand" evidence="10">
    <location>
        <begin position="151"/>
        <end position="154"/>
    </location>
</feature>
<feature type="helix" evidence="12">
    <location>
        <begin position="155"/>
        <end position="158"/>
    </location>
</feature>
<feature type="helix" evidence="12">
    <location>
        <begin position="161"/>
        <end position="179"/>
    </location>
</feature>
<feature type="helix" evidence="12">
    <location>
        <begin position="185"/>
        <end position="187"/>
    </location>
</feature>
<feature type="helix" evidence="12">
    <location>
        <begin position="191"/>
        <end position="220"/>
    </location>
</feature>
<feature type="helix" evidence="12">
    <location>
        <begin position="222"/>
        <end position="224"/>
    </location>
</feature>
<feature type="helix" evidence="12">
    <location>
        <begin position="227"/>
        <end position="256"/>
    </location>
</feature>
<feature type="helix" evidence="12">
    <location>
        <begin position="261"/>
        <end position="263"/>
    </location>
</feature>
<feature type="helix" evidence="11">
    <location>
        <begin position="267"/>
        <end position="269"/>
    </location>
</feature>
<feature type="helix" evidence="11">
    <location>
        <begin position="275"/>
        <end position="285"/>
    </location>
</feature>
<protein>
    <recommendedName>
        <fullName>Phosphatidylinositol-binding clathrin assembly protein</fullName>
    </recommendedName>
    <alternativeName>
        <fullName>Clathrin assembly lymphoid myeloid leukemia protein</fullName>
        <shortName>rCALM</shortName>
    </alternativeName>
</protein>
<evidence type="ECO:0000250" key="1"/>
<evidence type="ECO:0000250" key="2">
    <source>
        <dbReference type="UniProtKB" id="Q13492"/>
    </source>
</evidence>
<evidence type="ECO:0000255" key="3">
    <source>
        <dbReference type="PROSITE-ProRule" id="PRU00243"/>
    </source>
</evidence>
<evidence type="ECO:0000256" key="4">
    <source>
        <dbReference type="SAM" id="MobiDB-lite"/>
    </source>
</evidence>
<evidence type="ECO:0000269" key="5">
    <source>
    </source>
</evidence>
<evidence type="ECO:0000269" key="6">
    <source>
    </source>
</evidence>
<evidence type="ECO:0000303" key="7">
    <source>
    </source>
</evidence>
<evidence type="ECO:0000305" key="8"/>
<evidence type="ECO:0000312" key="9">
    <source>
        <dbReference type="EMBL" id="AAB97079.1"/>
    </source>
</evidence>
<evidence type="ECO:0007829" key="10">
    <source>
        <dbReference type="PDB" id="1HF8"/>
    </source>
</evidence>
<evidence type="ECO:0007829" key="11">
    <source>
        <dbReference type="PDB" id="3ZYK"/>
    </source>
</evidence>
<evidence type="ECO:0007829" key="12">
    <source>
        <dbReference type="PDB" id="3ZYL"/>
    </source>
</evidence>
<keyword id="KW-0002">3D-structure</keyword>
<keyword id="KW-0007">Acetylation</keyword>
<keyword id="KW-0025">Alternative splicing</keyword>
<keyword id="KW-1003">Cell membrane</keyword>
<keyword id="KW-0168">Coated pit</keyword>
<keyword id="KW-0968">Cytoplasmic vesicle</keyword>
<keyword id="KW-0254">Endocytosis</keyword>
<keyword id="KW-0333">Golgi apparatus</keyword>
<keyword id="KW-1017">Isopeptide bond</keyword>
<keyword id="KW-0472">Membrane</keyword>
<keyword id="KW-0539">Nucleus</keyword>
<keyword id="KW-0597">Phosphoprotein</keyword>
<keyword id="KW-1185">Reference proteome</keyword>
<keyword id="KW-0832">Ubl conjugation</keyword>
<accession>O55012</accession>
<accession>O55011</accession>
<reference evidence="8" key="1">
    <citation type="journal article" date="1999" name="Exp. Mol. Med.">
        <title>Molecular cloning of clathrin assembly protein gene (rCALM) and its differential expression to AP180 in rat brain.</title>
        <authorList>
            <person name="Kim H.-L."/>
            <person name="Lee S.C."/>
        </authorList>
    </citation>
    <scope>NUCLEOTIDE SEQUENCE [MRNA] (ISOFORMS 1 AND 2)</scope>
    <scope>TISSUE SPECIFICITY</scope>
    <source>
        <strain evidence="9">Sprague-Dawley</strain>
        <tissue evidence="9">Brain</tissue>
    </source>
</reference>
<reference key="2">
    <citation type="journal article" date="2000" name="Exp. Mol. Med.">
        <title>Purification of clathrin assembly protein from rat liver.</title>
        <authorList>
            <person name="Kim H.L."/>
            <person name="Kim J.A."/>
        </authorList>
    </citation>
    <scope>FUNCTION</scope>
    <scope>INTERACTION WITH CLATHRIN</scope>
</reference>
<reference key="3">
    <citation type="journal article" date="2001" name="Science">
        <title>Simultaneous binding of PtdIns(4,5)P2 and clathrin by AP180 in the nucleation of clathrin lattices on membranes.</title>
        <authorList>
            <person name="Ford M.G."/>
            <person name="Pearse B.M."/>
            <person name="Higgins M.K."/>
            <person name="Vallis Y."/>
            <person name="Owen D.J."/>
            <person name="Gibson A."/>
            <person name="Hopkins C.R."/>
            <person name="Evans P.R."/>
            <person name="McMahon H.T."/>
        </authorList>
    </citation>
    <scope>X-RAY CRYSTALLOGRAPHY (2.0 ANGSTROMS) OF 19-281</scope>
</reference>
<dbReference type="EMBL" id="AF041373">
    <property type="protein sequence ID" value="AAB97078.1"/>
    <property type="molecule type" value="mRNA"/>
</dbReference>
<dbReference type="EMBL" id="AF041374">
    <property type="protein sequence ID" value="AAB97079.1"/>
    <property type="molecule type" value="mRNA"/>
</dbReference>
<dbReference type="RefSeq" id="NP_446006.1">
    <molecule id="O55012-1"/>
    <property type="nucleotide sequence ID" value="NM_053554.2"/>
</dbReference>
<dbReference type="PDB" id="1HF8">
    <property type="method" value="X-ray"/>
    <property type="resolution" value="2.00 A"/>
    <property type="chains" value="A=1-289"/>
</dbReference>
<dbReference type="PDB" id="1HFA">
    <property type="method" value="X-ray"/>
    <property type="resolution" value="2.00 A"/>
    <property type="chains" value="A=1-289"/>
</dbReference>
<dbReference type="PDB" id="1HG2">
    <property type="method" value="X-ray"/>
    <property type="resolution" value="2.00 A"/>
    <property type="chains" value="A=1-289"/>
</dbReference>
<dbReference type="PDB" id="1HG5">
    <property type="method" value="X-ray"/>
    <property type="resolution" value="2.00 A"/>
    <property type="chains" value="A=1-289"/>
</dbReference>
<dbReference type="PDB" id="3ZYK">
    <property type="method" value="X-ray"/>
    <property type="resolution" value="1.80 A"/>
    <property type="chains" value="A/B=1-289"/>
</dbReference>
<dbReference type="PDB" id="3ZYL">
    <property type="method" value="X-ray"/>
    <property type="resolution" value="1.70 A"/>
    <property type="chains" value="A/B=1-264"/>
</dbReference>
<dbReference type="PDB" id="3ZYM">
    <property type="method" value="X-ray"/>
    <property type="resolution" value="2.03 A"/>
    <property type="chains" value="A/B/C=1-264"/>
</dbReference>
<dbReference type="PDB" id="7JXV">
    <property type="method" value="X-ray"/>
    <property type="resolution" value="2.35 A"/>
    <property type="chains" value="A=1-281"/>
</dbReference>
<dbReference type="PDBsum" id="1HF8"/>
<dbReference type="PDBsum" id="1HFA"/>
<dbReference type="PDBsum" id="1HG2"/>
<dbReference type="PDBsum" id="1HG5"/>
<dbReference type="PDBsum" id="3ZYK"/>
<dbReference type="PDBsum" id="3ZYL"/>
<dbReference type="PDBsum" id="3ZYM"/>
<dbReference type="PDBsum" id="7JXV"/>
<dbReference type="SMR" id="O55012"/>
<dbReference type="BioGRID" id="250139">
    <property type="interactions" value="2"/>
</dbReference>
<dbReference type="ELM" id="O55012"/>
<dbReference type="FunCoup" id="O55012">
    <property type="interactions" value="4189"/>
</dbReference>
<dbReference type="IntAct" id="O55012">
    <property type="interactions" value="4"/>
</dbReference>
<dbReference type="STRING" id="10116.ENSRNOP00000076067"/>
<dbReference type="GlyGen" id="O55012">
    <property type="glycosylation" value="2 sites, 1 O-linked glycan (1 site)"/>
</dbReference>
<dbReference type="iPTMnet" id="O55012"/>
<dbReference type="PhosphoSitePlus" id="O55012"/>
<dbReference type="jPOST" id="O55012"/>
<dbReference type="PaxDb" id="10116-ENSRNOP00000025415"/>
<dbReference type="PeptideAtlas" id="O55012"/>
<dbReference type="GeneID" id="89816"/>
<dbReference type="KEGG" id="rno:89816"/>
<dbReference type="UCSC" id="RGD:621054">
    <molecule id="O55012-1"/>
    <property type="organism name" value="rat"/>
</dbReference>
<dbReference type="AGR" id="RGD:621054"/>
<dbReference type="CTD" id="8301"/>
<dbReference type="RGD" id="621054">
    <property type="gene designation" value="Picalm"/>
</dbReference>
<dbReference type="eggNOG" id="KOG0251">
    <property type="taxonomic scope" value="Eukaryota"/>
</dbReference>
<dbReference type="InParanoid" id="O55012"/>
<dbReference type="PhylomeDB" id="O55012"/>
<dbReference type="Reactome" id="R-RNO-432722">
    <property type="pathway name" value="Golgi Associated Vesicle Biogenesis"/>
</dbReference>
<dbReference type="Reactome" id="R-RNO-8856825">
    <property type="pathway name" value="Cargo recognition for clathrin-mediated endocytosis"/>
</dbReference>
<dbReference type="Reactome" id="R-RNO-8856828">
    <property type="pathway name" value="Clathrin-mediated endocytosis"/>
</dbReference>
<dbReference type="Reactome" id="R-RNO-9696264">
    <property type="pathway name" value="RND3 GTPase cycle"/>
</dbReference>
<dbReference type="EvolutionaryTrace" id="O55012"/>
<dbReference type="PRO" id="PR:O55012"/>
<dbReference type="Proteomes" id="UP000002494">
    <property type="component" value="Unplaced"/>
</dbReference>
<dbReference type="GO" id="GO:0009986">
    <property type="term" value="C:cell surface"/>
    <property type="evidence" value="ECO:0000266"/>
    <property type="project" value="RGD"/>
</dbReference>
<dbReference type="GO" id="GO:0030132">
    <property type="term" value="C:clathrin coat of coated pit"/>
    <property type="evidence" value="ECO:0000266"/>
    <property type="project" value="RGD"/>
</dbReference>
<dbReference type="GO" id="GO:0005905">
    <property type="term" value="C:clathrin-coated pit"/>
    <property type="evidence" value="ECO:0000250"/>
    <property type="project" value="UniProtKB"/>
</dbReference>
<dbReference type="GO" id="GO:0030136">
    <property type="term" value="C:clathrin-coated vesicle"/>
    <property type="evidence" value="ECO:0000314"/>
    <property type="project" value="BHF-UCL"/>
</dbReference>
<dbReference type="GO" id="GO:0005769">
    <property type="term" value="C:early endosome"/>
    <property type="evidence" value="ECO:0000266"/>
    <property type="project" value="RGD"/>
</dbReference>
<dbReference type="GO" id="GO:0005768">
    <property type="term" value="C:endosome"/>
    <property type="evidence" value="ECO:0000314"/>
    <property type="project" value="BHF-UCL"/>
</dbReference>
<dbReference type="GO" id="GO:0070381">
    <property type="term" value="C:endosome to plasma membrane transport vesicle"/>
    <property type="evidence" value="ECO:0000266"/>
    <property type="project" value="RGD"/>
</dbReference>
<dbReference type="GO" id="GO:0098894">
    <property type="term" value="C:extrinsic component of presynaptic endocytic zone membrane"/>
    <property type="evidence" value="ECO:0000314"/>
    <property type="project" value="SynGO"/>
</dbReference>
<dbReference type="GO" id="GO:0005794">
    <property type="term" value="C:Golgi apparatus"/>
    <property type="evidence" value="ECO:0007669"/>
    <property type="project" value="UniProtKB-SubCell"/>
</dbReference>
<dbReference type="GO" id="GO:0016020">
    <property type="term" value="C:membrane"/>
    <property type="evidence" value="ECO:0000315"/>
    <property type="project" value="ARUK-UCL"/>
</dbReference>
<dbReference type="GO" id="GO:0097418">
    <property type="term" value="C:neurofibrillary tangle"/>
    <property type="evidence" value="ECO:0000250"/>
    <property type="project" value="Alzheimers_University_of_Toronto"/>
</dbReference>
<dbReference type="GO" id="GO:0043025">
    <property type="term" value="C:neuronal cell body"/>
    <property type="evidence" value="ECO:0000314"/>
    <property type="project" value="RGD"/>
</dbReference>
<dbReference type="GO" id="GO:0005634">
    <property type="term" value="C:nucleus"/>
    <property type="evidence" value="ECO:0000266"/>
    <property type="project" value="RGD"/>
</dbReference>
<dbReference type="GO" id="GO:0098688">
    <property type="term" value="C:parallel fiber to Purkinje cell synapse"/>
    <property type="evidence" value="ECO:0000314"/>
    <property type="project" value="SynGO"/>
</dbReference>
<dbReference type="GO" id="GO:0048471">
    <property type="term" value="C:perinuclear region of cytoplasm"/>
    <property type="evidence" value="ECO:0000266"/>
    <property type="project" value="RGD"/>
</dbReference>
<dbReference type="GO" id="GO:0005886">
    <property type="term" value="C:plasma membrane"/>
    <property type="evidence" value="ECO:0000314"/>
    <property type="project" value="BHF-UCL"/>
</dbReference>
<dbReference type="GO" id="GO:0098794">
    <property type="term" value="C:postsynapse"/>
    <property type="evidence" value="ECO:0000314"/>
    <property type="project" value="SynGO"/>
</dbReference>
<dbReference type="GO" id="GO:0014069">
    <property type="term" value="C:postsynaptic density"/>
    <property type="evidence" value="ECO:0000314"/>
    <property type="project" value="BHF-UCL"/>
</dbReference>
<dbReference type="GO" id="GO:0098843">
    <property type="term" value="C:postsynaptic endocytic zone"/>
    <property type="evidence" value="ECO:0000314"/>
    <property type="project" value="SynGO"/>
</dbReference>
<dbReference type="GO" id="GO:0045211">
    <property type="term" value="C:postsynaptic membrane"/>
    <property type="evidence" value="ECO:0000314"/>
    <property type="project" value="BHF-UCL"/>
</dbReference>
<dbReference type="GO" id="GO:0042734">
    <property type="term" value="C:presynaptic membrane"/>
    <property type="evidence" value="ECO:0000314"/>
    <property type="project" value="BHF-UCL"/>
</dbReference>
<dbReference type="GO" id="GO:0098685">
    <property type="term" value="C:Schaffer collateral - CA1 synapse"/>
    <property type="evidence" value="ECO:0000314"/>
    <property type="project" value="SynGO"/>
</dbReference>
<dbReference type="GO" id="GO:0008021">
    <property type="term" value="C:synaptic vesicle"/>
    <property type="evidence" value="ECO:0000314"/>
    <property type="project" value="BHF-UCL"/>
</dbReference>
<dbReference type="GO" id="GO:0031982">
    <property type="term" value="C:vesicle"/>
    <property type="evidence" value="ECO:0000250"/>
    <property type="project" value="Alzheimers_University_of_Toronto"/>
</dbReference>
<dbReference type="GO" id="GO:0005545">
    <property type="term" value="F:1-phosphatidylinositol binding"/>
    <property type="evidence" value="ECO:0000314"/>
    <property type="project" value="UniProtKB"/>
</dbReference>
<dbReference type="GO" id="GO:0030276">
    <property type="term" value="F:clathrin binding"/>
    <property type="evidence" value="ECO:0000314"/>
    <property type="project" value="UniProtKB"/>
</dbReference>
<dbReference type="GO" id="GO:0032050">
    <property type="term" value="F:clathrin heavy chain binding"/>
    <property type="evidence" value="ECO:0000266"/>
    <property type="project" value="RGD"/>
</dbReference>
<dbReference type="GO" id="GO:0042802">
    <property type="term" value="F:identical protein binding"/>
    <property type="evidence" value="ECO:0000353"/>
    <property type="project" value="IntAct"/>
</dbReference>
<dbReference type="GO" id="GO:0050750">
    <property type="term" value="F:low-density lipoprotein particle receptor binding"/>
    <property type="evidence" value="ECO:0000266"/>
    <property type="project" value="RGD"/>
</dbReference>
<dbReference type="GO" id="GO:0005546">
    <property type="term" value="F:phosphatidylinositol-4,5-bisphosphate binding"/>
    <property type="evidence" value="ECO:0000315"/>
    <property type="project" value="ARUK-UCL"/>
</dbReference>
<dbReference type="GO" id="GO:0017124">
    <property type="term" value="F:SH3 domain binding"/>
    <property type="evidence" value="ECO:0000314"/>
    <property type="project" value="RGD"/>
</dbReference>
<dbReference type="GO" id="GO:0031267">
    <property type="term" value="F:small GTPase binding"/>
    <property type="evidence" value="ECO:0000266"/>
    <property type="project" value="RGD"/>
</dbReference>
<dbReference type="GO" id="GO:0000149">
    <property type="term" value="F:SNARE binding"/>
    <property type="evidence" value="ECO:0000353"/>
    <property type="project" value="RGD"/>
</dbReference>
<dbReference type="GO" id="GO:0048156">
    <property type="term" value="F:tau protein binding"/>
    <property type="evidence" value="ECO:0000266"/>
    <property type="project" value="RGD"/>
</dbReference>
<dbReference type="GO" id="GO:0150093">
    <property type="term" value="P:amyloid-beta clearance by transcytosis"/>
    <property type="evidence" value="ECO:0000266"/>
    <property type="project" value="RGD"/>
</dbReference>
<dbReference type="GO" id="GO:0007409">
    <property type="term" value="P:axonogenesis"/>
    <property type="evidence" value="ECO:0000315"/>
    <property type="project" value="BHF-UCL"/>
</dbReference>
<dbReference type="GO" id="GO:0048268">
    <property type="term" value="P:clathrin coat assembly"/>
    <property type="evidence" value="ECO:0000314"/>
    <property type="project" value="RGD"/>
</dbReference>
<dbReference type="GO" id="GO:0072583">
    <property type="term" value="P:clathrin-dependent endocytosis"/>
    <property type="evidence" value="ECO:0000250"/>
    <property type="project" value="Alzheimers_University_of_Toronto"/>
</dbReference>
<dbReference type="GO" id="GO:0048813">
    <property type="term" value="P:dendrite morphogenesis"/>
    <property type="evidence" value="ECO:0000315"/>
    <property type="project" value="BHF-UCL"/>
</dbReference>
<dbReference type="GO" id="GO:0006897">
    <property type="term" value="P:endocytosis"/>
    <property type="evidence" value="ECO:0000266"/>
    <property type="project" value="RGD"/>
</dbReference>
<dbReference type="GO" id="GO:0016197">
    <property type="term" value="P:endosomal transport"/>
    <property type="evidence" value="ECO:0000266"/>
    <property type="project" value="RGD"/>
</dbReference>
<dbReference type="GO" id="GO:0030097">
    <property type="term" value="P:hemopoiesis"/>
    <property type="evidence" value="ECO:0000266"/>
    <property type="project" value="RGD"/>
</dbReference>
<dbReference type="GO" id="GO:0006879">
    <property type="term" value="P:intracellular iron ion homeostasis"/>
    <property type="evidence" value="ECO:0000266"/>
    <property type="project" value="RGD"/>
</dbReference>
<dbReference type="GO" id="GO:0007611">
    <property type="term" value="P:learning or memory"/>
    <property type="evidence" value="ECO:0000266"/>
    <property type="project" value="RGD"/>
</dbReference>
<dbReference type="GO" id="GO:0097753">
    <property type="term" value="P:membrane bending"/>
    <property type="evidence" value="ECO:0000266"/>
    <property type="project" value="RGD"/>
</dbReference>
<dbReference type="GO" id="GO:0060586">
    <property type="term" value="P:multicellular organismal-level iron ion homeostasis"/>
    <property type="evidence" value="ECO:0000250"/>
    <property type="project" value="Alzheimers_University_of_Toronto"/>
</dbReference>
<dbReference type="GO" id="GO:0010629">
    <property type="term" value="P:negative regulation of gene expression"/>
    <property type="evidence" value="ECO:0000250"/>
    <property type="project" value="Alzheimers_University_of_Toronto"/>
</dbReference>
<dbReference type="GO" id="GO:2000009">
    <property type="term" value="P:negative regulation of protein localization to cell surface"/>
    <property type="evidence" value="ECO:0000266"/>
    <property type="project" value="RGD"/>
</dbReference>
<dbReference type="GO" id="GO:1903077">
    <property type="term" value="P:negative regulation of protein localization to plasma membrane"/>
    <property type="evidence" value="ECO:0000266"/>
    <property type="project" value="RGD"/>
</dbReference>
<dbReference type="GO" id="GO:0048261">
    <property type="term" value="P:negative regulation of receptor-mediated endocytosis"/>
    <property type="evidence" value="ECO:0000266"/>
    <property type="project" value="RGD"/>
</dbReference>
<dbReference type="GO" id="GO:1902993">
    <property type="term" value="P:positive regulation of amyloid precursor protein catabolic process"/>
    <property type="evidence" value="ECO:0000250"/>
    <property type="project" value="Alzheimers_University_of_Toronto"/>
</dbReference>
<dbReference type="GO" id="GO:1902004">
    <property type="term" value="P:positive regulation of amyloid-beta formation"/>
    <property type="evidence" value="ECO:0000250"/>
    <property type="project" value="Alzheimers_University_of_Toronto"/>
</dbReference>
<dbReference type="GO" id="GO:0050772">
    <property type="term" value="P:positive regulation of axonogenesis"/>
    <property type="evidence" value="ECO:0000315"/>
    <property type="project" value="RGD"/>
</dbReference>
<dbReference type="GO" id="GO:1903861">
    <property type="term" value="P:positive regulation of dendrite extension"/>
    <property type="evidence" value="ECO:0000315"/>
    <property type="project" value="RGD"/>
</dbReference>
<dbReference type="GO" id="GO:0045893">
    <property type="term" value="P:positive regulation of DNA-templated transcription"/>
    <property type="evidence" value="ECO:0000266"/>
    <property type="project" value="RGD"/>
</dbReference>
<dbReference type="GO" id="GO:0046579">
    <property type="term" value="P:positive regulation of Ras protein signal transduction"/>
    <property type="evidence" value="ECO:0000266"/>
    <property type="project" value="RGD"/>
</dbReference>
<dbReference type="GO" id="GO:2000809">
    <property type="term" value="P:positive regulation of synaptic vesicle clustering"/>
    <property type="evidence" value="ECO:0000315"/>
    <property type="project" value="RGD"/>
</dbReference>
<dbReference type="GO" id="GO:1900244">
    <property type="term" value="P:positive regulation of synaptic vesicle endocytosis"/>
    <property type="evidence" value="ECO:0000315"/>
    <property type="project" value="RGD"/>
</dbReference>
<dbReference type="GO" id="GO:0031623">
    <property type="term" value="P:receptor internalization"/>
    <property type="evidence" value="ECO:0000266"/>
    <property type="project" value="RGD"/>
</dbReference>
<dbReference type="GO" id="GO:0006898">
    <property type="term" value="P:receptor-mediated endocytosis"/>
    <property type="evidence" value="ECO:0000250"/>
    <property type="project" value="UniProtKB"/>
</dbReference>
<dbReference type="GO" id="GO:1902991">
    <property type="term" value="P:regulation of amyloid precursor protein catabolic process"/>
    <property type="evidence" value="ECO:0000250"/>
    <property type="project" value="Alzheimers_University_of_Toronto"/>
</dbReference>
<dbReference type="GO" id="GO:0030100">
    <property type="term" value="P:regulation of endocytosis"/>
    <property type="evidence" value="ECO:0000315"/>
    <property type="project" value="BHF-UCL"/>
</dbReference>
<dbReference type="GO" id="GO:0032880">
    <property type="term" value="P:regulation of protein localization"/>
    <property type="evidence" value="ECO:0000266"/>
    <property type="project" value="RGD"/>
</dbReference>
<dbReference type="GO" id="GO:0051223">
    <property type="term" value="P:regulation of protein transport"/>
    <property type="evidence" value="ECO:0000315"/>
    <property type="project" value="BHF-UCL"/>
</dbReference>
<dbReference type="GO" id="GO:1900242">
    <property type="term" value="P:regulation of synaptic vesicle endocytosis"/>
    <property type="evidence" value="ECO:0000315"/>
    <property type="project" value="RGD"/>
</dbReference>
<dbReference type="GO" id="GO:1902803">
    <property type="term" value="P:regulation of synaptic vesicle transport"/>
    <property type="evidence" value="ECO:0000315"/>
    <property type="project" value="RGD"/>
</dbReference>
<dbReference type="GO" id="GO:2000331">
    <property type="term" value="P:regulation of terminal button organization"/>
    <property type="evidence" value="ECO:0000315"/>
    <property type="project" value="RGD"/>
</dbReference>
<dbReference type="GO" id="GO:0097494">
    <property type="term" value="P:regulation of vesicle size"/>
    <property type="evidence" value="ECO:0000266"/>
    <property type="project" value="RGD"/>
</dbReference>
<dbReference type="GO" id="GO:0048488">
    <property type="term" value="P:synaptic vesicle endocytosis"/>
    <property type="evidence" value="ECO:0000314"/>
    <property type="project" value="SynGO"/>
</dbReference>
<dbReference type="GO" id="GO:0016188">
    <property type="term" value="P:synaptic vesicle maturation"/>
    <property type="evidence" value="ECO:0000250"/>
    <property type="project" value="Alzheimers_University_of_Toronto"/>
</dbReference>
<dbReference type="GO" id="GO:0006900">
    <property type="term" value="P:vesicle budding from membrane"/>
    <property type="evidence" value="ECO:0000266"/>
    <property type="project" value="RGD"/>
</dbReference>
<dbReference type="GO" id="GO:0035459">
    <property type="term" value="P:vesicle cargo loading"/>
    <property type="evidence" value="ECO:0000250"/>
    <property type="project" value="Alzheimers_University_of_Toronto"/>
</dbReference>
<dbReference type="GO" id="GO:0016192">
    <property type="term" value="P:vesicle-mediated transport"/>
    <property type="evidence" value="ECO:0000315"/>
    <property type="project" value="BHF-UCL"/>
</dbReference>
<dbReference type="CDD" id="cd16985">
    <property type="entry name" value="ANTH_N_AP180"/>
    <property type="match status" value="1"/>
</dbReference>
<dbReference type="FunFam" id="1.20.58.150:FF:000001">
    <property type="entry name" value="phosphatidylinositol-binding clathrin assembly protein-like isoform X1"/>
    <property type="match status" value="1"/>
</dbReference>
<dbReference type="FunFam" id="1.25.40.90:FF:000001">
    <property type="entry name" value="phosphatidylinositol-binding clathrin assembly protein-like isoform X1"/>
    <property type="match status" value="1"/>
</dbReference>
<dbReference type="Gene3D" id="1.25.40.90">
    <property type="match status" value="1"/>
</dbReference>
<dbReference type="Gene3D" id="1.20.58.150">
    <property type="entry name" value="ANTH domain"/>
    <property type="match status" value="1"/>
</dbReference>
<dbReference type="InterPro" id="IPR011417">
    <property type="entry name" value="ANTH_dom"/>
</dbReference>
<dbReference type="InterPro" id="IPR014712">
    <property type="entry name" value="ANTH_dom_sf"/>
</dbReference>
<dbReference type="InterPro" id="IPR045192">
    <property type="entry name" value="AP180-like"/>
</dbReference>
<dbReference type="InterPro" id="IPR013809">
    <property type="entry name" value="ENTH"/>
</dbReference>
<dbReference type="InterPro" id="IPR008942">
    <property type="entry name" value="ENTH_VHS"/>
</dbReference>
<dbReference type="PANTHER" id="PTHR22951">
    <property type="entry name" value="CLATHRIN ASSEMBLY PROTEIN"/>
    <property type="match status" value="1"/>
</dbReference>
<dbReference type="PANTHER" id="PTHR22951:SF16">
    <property type="entry name" value="PHOSPHATIDYLINOSITOL-BINDING CLATHRIN ASSEMBLY PROTEIN"/>
    <property type="match status" value="1"/>
</dbReference>
<dbReference type="Pfam" id="PF07651">
    <property type="entry name" value="ANTH"/>
    <property type="match status" value="1"/>
</dbReference>
<dbReference type="SMART" id="SM00273">
    <property type="entry name" value="ENTH"/>
    <property type="match status" value="1"/>
</dbReference>
<dbReference type="SUPFAM" id="SSF48464">
    <property type="entry name" value="ENTH/VHS domain"/>
    <property type="match status" value="1"/>
</dbReference>
<dbReference type="SUPFAM" id="SSF89009">
    <property type="entry name" value="GAT-like domain"/>
    <property type="match status" value="1"/>
</dbReference>
<dbReference type="PROSITE" id="PS50942">
    <property type="entry name" value="ENTH"/>
    <property type="match status" value="1"/>
</dbReference>
<comment type="function">
    <text evidence="2 6">Cytoplasmic adapter protein that plays a critical role in clathrin-mediated endocytosis which is important in processes such as internalization of cell receptors, synaptic transmission or removal of apoptotic cells. Recruits AP-2 and attaches clathrin triskelions to the cytoplasmic side of plasma membrane leading to clathrin-coated vesicles (CCVs) assembly. Furthermore, regulates clathrin-coated vesicle size and maturation by directly sensing and driving membrane curvature. In addition to binding to clathrin, mediates the endocytosis of small R-SNARES (Soluble NSF Attachment Protein REceptors) between plasma membranes and endosomes including VAMP2, VAMP3, VAMP4, VAMP7 or VAMP8. In turn, PICALM-dependent SNARE endocytosis is required for the formation and maturation of autophagic precursors. Modulates thereby autophagy and the turnover of autophagy substrates such as MAPT/TAU or amyloid precursor protein cleaved C-terminal fragment (APP-CTF).</text>
</comment>
<comment type="subunit">
    <text evidence="2 6">Binds to clathrin; involves primarily the C-terminal sequences, but the full-length protein is required for full binding capacity. Binds phosphatidylinositol 4,5- bisphosphate. Interacts with PIMREG; this interaction may change the subcellular location into the nucleus. Interacts with AP2A1 (via its alpha-appendage domain). Interacts (via N-terminus) with VAMP2; VAMP3; VAMP7 and VAMP8 (Via N-terminus). Interacts with LC3/MAP1LC3A.</text>
</comment>
<comment type="interaction">
    <interactant intactId="EBI-915601">
        <id>O55012</id>
    </interactant>
    <interactant intactId="EBI-915601">
        <id>O55012</id>
        <label>Picalm</label>
    </interactant>
    <organismsDiffer>false</organismsDiffer>
    <experiments>3</experiments>
</comment>
<comment type="interaction">
    <interactant intactId="EBI-915601">
        <id>O55012</id>
    </interactant>
    <interactant intactId="EBI-520113">
        <id>P63027</id>
        <label>VAMP2</label>
    </interactant>
    <organismsDiffer>true</organismsDiffer>
    <experiments>2</experiments>
</comment>
<comment type="interaction">
    <interactant intactId="EBI-915601">
        <id>O55012</id>
    </interactant>
    <interactant intactId="EBI-722343">
        <id>Q15836</id>
        <label>VAMP3</label>
    </interactant>
    <organismsDiffer>true</organismsDiffer>
    <experiments>2</experiments>
</comment>
<comment type="interaction">
    <interactant intactId="EBI-915601">
        <id>O55012</id>
    </interactant>
    <interactant intactId="EBI-1812572">
        <id>O70404</id>
        <label>Vamp8</label>
    </interactant>
    <organismsDiffer>true</organismsDiffer>
    <experiments>4</experiments>
</comment>
<comment type="subcellular location">
    <subcellularLocation>
        <location evidence="2">Cell membrane</location>
    </subcellularLocation>
    <subcellularLocation>
        <location evidence="2">Membrane</location>
        <location evidence="2">Clathrin-coated pit</location>
    </subcellularLocation>
    <subcellularLocation>
        <location evidence="2">Golgi apparatus</location>
    </subcellularLocation>
    <subcellularLocation>
        <location evidence="2">Cytoplasmic vesicle</location>
        <location evidence="2">Clathrin-coated vesicle</location>
    </subcellularLocation>
    <subcellularLocation>
        <location evidence="2">Nucleus</location>
    </subcellularLocation>
    <text evidence="2">Colocalized with clathrin in the Golgi area. Interaction with PIMREG may target PICALM to the nucleus in some cells.</text>
</comment>
<comment type="alternative products">
    <event type="alternative splicing"/>
    <isoform>
        <id>O55012-1</id>
        <name evidence="5">1</name>
        <name evidence="5">Long</name>
        <sequence type="displayed"/>
    </isoform>
    <isoform>
        <id>O55012-2</id>
        <name evidence="5">2</name>
        <name evidence="5">Short</name>
        <sequence type="described" ref="VSP_050687"/>
    </isoform>
</comment>
<comment type="tissue specificity">
    <text evidence="5">Isoform 2 was found in most tissues examined. Isoform 1 has an overlapping expression pattern but is absent from lung, heart and pancreas. Both isoforms are widely expressed in the brain, higher levels are seen in hippocampus, dentate gyrus, medial habenula nucleus and cerebellar granule cells.</text>
</comment>
<comment type="similarity">
    <text evidence="8">Belongs to the PICALM/SNAP91 family.</text>
</comment>
<name>PICAL_RAT</name>
<organism evidence="9">
    <name type="scientific">Rattus norvegicus</name>
    <name type="common">Rat</name>
    <dbReference type="NCBI Taxonomy" id="10116"/>
    <lineage>
        <taxon>Eukaryota</taxon>
        <taxon>Metazoa</taxon>
        <taxon>Chordata</taxon>
        <taxon>Craniata</taxon>
        <taxon>Vertebrata</taxon>
        <taxon>Euteleostomi</taxon>
        <taxon>Mammalia</taxon>
        <taxon>Eutheria</taxon>
        <taxon>Euarchontoglires</taxon>
        <taxon>Glires</taxon>
        <taxon>Rodentia</taxon>
        <taxon>Myomorpha</taxon>
        <taxon>Muroidea</taxon>
        <taxon>Muridae</taxon>
        <taxon>Murinae</taxon>
        <taxon>Rattus</taxon>
    </lineage>
</organism>